<gene>
    <name evidence="1" type="primary">murG</name>
    <name type="ordered locus">YPTS_0715</name>
</gene>
<sequence length="356" mass="37760">MSGKTKRLMVMAGGTGGHVFPGLAVAHHLMAQGWQVRWLGTADRMEASLVPQHGIEIDFIKISGLRGKGLMAQLTAPIRIYRAVRQAQKIMRDYQPDVVLGMGGYVSGPGGLAAWLCGVPVVLHEQNGIAGLTNRWLARIAKKVLQAFPGAFPNADVVGNPVRTDVLALPLPAVRLSGREGPIRVLVIGGSQGARILNQTLPLVAASLGEQITLWHQVGKGALPEVSQAYQQAGQAGHQVVEFIDDMAAAYAWADVVVCRSGALTVSEVAAAGLPAIFVPFQHKDRQQYWNALPLEKAGAAKIIEQPQFTATSVSSLLAGWDRATLLSMAERARSVAIPDATERVAAEVVAASKSA</sequence>
<keyword id="KW-0131">Cell cycle</keyword>
<keyword id="KW-0132">Cell division</keyword>
<keyword id="KW-0997">Cell inner membrane</keyword>
<keyword id="KW-1003">Cell membrane</keyword>
<keyword id="KW-0133">Cell shape</keyword>
<keyword id="KW-0961">Cell wall biogenesis/degradation</keyword>
<keyword id="KW-0328">Glycosyltransferase</keyword>
<keyword id="KW-0472">Membrane</keyword>
<keyword id="KW-0573">Peptidoglycan synthesis</keyword>
<keyword id="KW-0808">Transferase</keyword>
<dbReference type="EC" id="2.4.1.227" evidence="1"/>
<dbReference type="EMBL" id="CP001048">
    <property type="protein sequence ID" value="ACC87699.1"/>
    <property type="molecule type" value="Genomic_DNA"/>
</dbReference>
<dbReference type="RefSeq" id="WP_011191735.1">
    <property type="nucleotide sequence ID" value="NZ_CP009780.1"/>
</dbReference>
<dbReference type="SMR" id="B2K4E6"/>
<dbReference type="CAZy" id="GT28">
    <property type="family name" value="Glycosyltransferase Family 28"/>
</dbReference>
<dbReference type="GeneID" id="49787307"/>
<dbReference type="KEGG" id="ypb:YPTS_0715"/>
<dbReference type="PATRIC" id="fig|502801.10.peg.46"/>
<dbReference type="UniPathway" id="UPA00219"/>
<dbReference type="GO" id="GO:0005886">
    <property type="term" value="C:plasma membrane"/>
    <property type="evidence" value="ECO:0007669"/>
    <property type="project" value="UniProtKB-SubCell"/>
</dbReference>
<dbReference type="GO" id="GO:0051991">
    <property type="term" value="F:UDP-N-acetyl-D-glucosamine:N-acetylmuramoyl-L-alanyl-D-glutamyl-meso-2,6-diaminopimelyl-D-alanyl-D-alanine-diphosphoundecaprenol 4-beta-N-acetylglucosaminlytransferase activity"/>
    <property type="evidence" value="ECO:0007669"/>
    <property type="project" value="RHEA"/>
</dbReference>
<dbReference type="GO" id="GO:0050511">
    <property type="term" value="F:undecaprenyldiphospho-muramoylpentapeptide beta-N-acetylglucosaminyltransferase activity"/>
    <property type="evidence" value="ECO:0007669"/>
    <property type="project" value="UniProtKB-UniRule"/>
</dbReference>
<dbReference type="GO" id="GO:0005975">
    <property type="term" value="P:carbohydrate metabolic process"/>
    <property type="evidence" value="ECO:0007669"/>
    <property type="project" value="InterPro"/>
</dbReference>
<dbReference type="GO" id="GO:0051301">
    <property type="term" value="P:cell division"/>
    <property type="evidence" value="ECO:0007669"/>
    <property type="project" value="UniProtKB-KW"/>
</dbReference>
<dbReference type="GO" id="GO:0071555">
    <property type="term" value="P:cell wall organization"/>
    <property type="evidence" value="ECO:0007669"/>
    <property type="project" value="UniProtKB-KW"/>
</dbReference>
<dbReference type="GO" id="GO:0030259">
    <property type="term" value="P:lipid glycosylation"/>
    <property type="evidence" value="ECO:0007669"/>
    <property type="project" value="UniProtKB-UniRule"/>
</dbReference>
<dbReference type="GO" id="GO:0009252">
    <property type="term" value="P:peptidoglycan biosynthetic process"/>
    <property type="evidence" value="ECO:0007669"/>
    <property type="project" value="UniProtKB-UniRule"/>
</dbReference>
<dbReference type="GO" id="GO:0008360">
    <property type="term" value="P:regulation of cell shape"/>
    <property type="evidence" value="ECO:0007669"/>
    <property type="project" value="UniProtKB-KW"/>
</dbReference>
<dbReference type="CDD" id="cd03785">
    <property type="entry name" value="GT28_MurG"/>
    <property type="match status" value="1"/>
</dbReference>
<dbReference type="FunFam" id="3.40.50.2000:FF:000016">
    <property type="entry name" value="UDP-N-acetylglucosamine--N-acetylmuramyl-(pentapeptide) pyrophosphoryl-undecaprenol N-acetylglucosamine transferase"/>
    <property type="match status" value="1"/>
</dbReference>
<dbReference type="FunFam" id="3.40.50.2000:FF:000018">
    <property type="entry name" value="UDP-N-acetylglucosamine--N-acetylmuramyl-(pentapeptide) pyrophosphoryl-undecaprenol N-acetylglucosamine transferase"/>
    <property type="match status" value="1"/>
</dbReference>
<dbReference type="Gene3D" id="3.40.50.2000">
    <property type="entry name" value="Glycogen Phosphorylase B"/>
    <property type="match status" value="2"/>
</dbReference>
<dbReference type="HAMAP" id="MF_00033">
    <property type="entry name" value="MurG"/>
    <property type="match status" value="1"/>
</dbReference>
<dbReference type="InterPro" id="IPR006009">
    <property type="entry name" value="GlcNAc_MurG"/>
</dbReference>
<dbReference type="InterPro" id="IPR007235">
    <property type="entry name" value="Glyco_trans_28_C"/>
</dbReference>
<dbReference type="InterPro" id="IPR004276">
    <property type="entry name" value="GlycoTrans_28_N"/>
</dbReference>
<dbReference type="NCBIfam" id="TIGR01133">
    <property type="entry name" value="murG"/>
    <property type="match status" value="1"/>
</dbReference>
<dbReference type="PANTHER" id="PTHR21015:SF22">
    <property type="entry name" value="GLYCOSYLTRANSFERASE"/>
    <property type="match status" value="1"/>
</dbReference>
<dbReference type="PANTHER" id="PTHR21015">
    <property type="entry name" value="UDP-N-ACETYLGLUCOSAMINE--N-ACETYLMURAMYL-(PENTAPEPTIDE) PYROPHOSPHORYL-UNDECAPRENOL N-ACETYLGLUCOSAMINE TRANSFERASE 1"/>
    <property type="match status" value="1"/>
</dbReference>
<dbReference type="Pfam" id="PF04101">
    <property type="entry name" value="Glyco_tran_28_C"/>
    <property type="match status" value="1"/>
</dbReference>
<dbReference type="Pfam" id="PF03033">
    <property type="entry name" value="Glyco_transf_28"/>
    <property type="match status" value="1"/>
</dbReference>
<dbReference type="SUPFAM" id="SSF53756">
    <property type="entry name" value="UDP-Glycosyltransferase/glycogen phosphorylase"/>
    <property type="match status" value="1"/>
</dbReference>
<reference key="1">
    <citation type="submission" date="2008-04" db="EMBL/GenBank/DDBJ databases">
        <title>Complete sequence of Yersinia pseudotuberculosis PB1/+.</title>
        <authorList>
            <person name="Copeland A."/>
            <person name="Lucas S."/>
            <person name="Lapidus A."/>
            <person name="Glavina del Rio T."/>
            <person name="Dalin E."/>
            <person name="Tice H."/>
            <person name="Bruce D."/>
            <person name="Goodwin L."/>
            <person name="Pitluck S."/>
            <person name="Munk A.C."/>
            <person name="Brettin T."/>
            <person name="Detter J.C."/>
            <person name="Han C."/>
            <person name="Tapia R."/>
            <person name="Schmutz J."/>
            <person name="Larimer F."/>
            <person name="Land M."/>
            <person name="Hauser L."/>
            <person name="Challacombe J.F."/>
            <person name="Green L."/>
            <person name="Lindler L.E."/>
            <person name="Nikolich M.P."/>
            <person name="Richardson P."/>
        </authorList>
    </citation>
    <scope>NUCLEOTIDE SEQUENCE [LARGE SCALE GENOMIC DNA]</scope>
    <source>
        <strain>PB1/+</strain>
    </source>
</reference>
<proteinExistence type="inferred from homology"/>
<comment type="function">
    <text evidence="1">Cell wall formation. Catalyzes the transfer of a GlcNAc subunit on undecaprenyl-pyrophosphoryl-MurNAc-pentapeptide (lipid intermediate I) to form undecaprenyl-pyrophosphoryl-MurNAc-(pentapeptide)GlcNAc (lipid intermediate II).</text>
</comment>
<comment type="catalytic activity">
    <reaction evidence="1">
        <text>di-trans,octa-cis-undecaprenyl diphospho-N-acetyl-alpha-D-muramoyl-L-alanyl-D-glutamyl-meso-2,6-diaminopimeloyl-D-alanyl-D-alanine + UDP-N-acetyl-alpha-D-glucosamine = di-trans,octa-cis-undecaprenyl diphospho-[N-acetyl-alpha-D-glucosaminyl-(1-&gt;4)]-N-acetyl-alpha-D-muramoyl-L-alanyl-D-glutamyl-meso-2,6-diaminopimeloyl-D-alanyl-D-alanine + UDP + H(+)</text>
        <dbReference type="Rhea" id="RHEA:31227"/>
        <dbReference type="ChEBI" id="CHEBI:15378"/>
        <dbReference type="ChEBI" id="CHEBI:57705"/>
        <dbReference type="ChEBI" id="CHEBI:58223"/>
        <dbReference type="ChEBI" id="CHEBI:61387"/>
        <dbReference type="ChEBI" id="CHEBI:61388"/>
        <dbReference type="EC" id="2.4.1.227"/>
    </reaction>
</comment>
<comment type="pathway">
    <text evidence="1">Cell wall biogenesis; peptidoglycan biosynthesis.</text>
</comment>
<comment type="subcellular location">
    <subcellularLocation>
        <location evidence="1">Cell inner membrane</location>
        <topology evidence="1">Peripheral membrane protein</topology>
        <orientation evidence="1">Cytoplasmic side</orientation>
    </subcellularLocation>
</comment>
<comment type="similarity">
    <text evidence="1">Belongs to the glycosyltransferase 28 family. MurG subfamily.</text>
</comment>
<name>MURG_YERPB</name>
<evidence type="ECO:0000255" key="1">
    <source>
        <dbReference type="HAMAP-Rule" id="MF_00033"/>
    </source>
</evidence>
<feature type="chain" id="PRO_1000090491" description="UDP-N-acetylglucosamine--N-acetylmuramyl-(pentapeptide) pyrophosphoryl-undecaprenol N-acetylglucosamine transferase">
    <location>
        <begin position="1"/>
        <end position="356"/>
    </location>
</feature>
<feature type="binding site" evidence="1">
    <location>
        <begin position="15"/>
        <end position="17"/>
    </location>
    <ligand>
        <name>UDP-N-acetyl-alpha-D-glucosamine</name>
        <dbReference type="ChEBI" id="CHEBI:57705"/>
    </ligand>
</feature>
<feature type="binding site" evidence="1">
    <location>
        <position position="127"/>
    </location>
    <ligand>
        <name>UDP-N-acetyl-alpha-D-glucosamine</name>
        <dbReference type="ChEBI" id="CHEBI:57705"/>
    </ligand>
</feature>
<feature type="binding site" evidence="1">
    <location>
        <position position="163"/>
    </location>
    <ligand>
        <name>UDP-N-acetyl-alpha-D-glucosamine</name>
        <dbReference type="ChEBI" id="CHEBI:57705"/>
    </ligand>
</feature>
<feature type="binding site" evidence="1">
    <location>
        <position position="191"/>
    </location>
    <ligand>
        <name>UDP-N-acetyl-alpha-D-glucosamine</name>
        <dbReference type="ChEBI" id="CHEBI:57705"/>
    </ligand>
</feature>
<feature type="binding site" evidence="1">
    <location>
        <position position="244"/>
    </location>
    <ligand>
        <name>UDP-N-acetyl-alpha-D-glucosamine</name>
        <dbReference type="ChEBI" id="CHEBI:57705"/>
    </ligand>
</feature>
<feature type="binding site" evidence="1">
    <location>
        <begin position="263"/>
        <end position="268"/>
    </location>
    <ligand>
        <name>UDP-N-acetyl-alpha-D-glucosamine</name>
        <dbReference type="ChEBI" id="CHEBI:57705"/>
    </ligand>
</feature>
<feature type="binding site" evidence="1">
    <location>
        <position position="288"/>
    </location>
    <ligand>
        <name>UDP-N-acetyl-alpha-D-glucosamine</name>
        <dbReference type="ChEBI" id="CHEBI:57705"/>
    </ligand>
</feature>
<protein>
    <recommendedName>
        <fullName evidence="1">UDP-N-acetylglucosamine--N-acetylmuramyl-(pentapeptide) pyrophosphoryl-undecaprenol N-acetylglucosamine transferase</fullName>
        <ecNumber evidence="1">2.4.1.227</ecNumber>
    </recommendedName>
    <alternativeName>
        <fullName evidence="1">Undecaprenyl-PP-MurNAc-pentapeptide-UDPGlcNAc GlcNAc transferase</fullName>
    </alternativeName>
</protein>
<accession>B2K4E6</accession>
<organism>
    <name type="scientific">Yersinia pseudotuberculosis serotype IB (strain PB1/+)</name>
    <dbReference type="NCBI Taxonomy" id="502801"/>
    <lineage>
        <taxon>Bacteria</taxon>
        <taxon>Pseudomonadati</taxon>
        <taxon>Pseudomonadota</taxon>
        <taxon>Gammaproteobacteria</taxon>
        <taxon>Enterobacterales</taxon>
        <taxon>Yersiniaceae</taxon>
        <taxon>Yersinia</taxon>
    </lineage>
</organism>